<name>ZN274_MACFA</name>
<evidence type="ECO:0000250" key="1"/>
<evidence type="ECO:0000250" key="2">
    <source>
        <dbReference type="UniProtKB" id="Q96GC6"/>
    </source>
</evidence>
<evidence type="ECO:0000255" key="3">
    <source>
        <dbReference type="PROSITE-ProRule" id="PRU00042"/>
    </source>
</evidence>
<evidence type="ECO:0000255" key="4">
    <source>
        <dbReference type="PROSITE-ProRule" id="PRU00119"/>
    </source>
</evidence>
<evidence type="ECO:0000255" key="5">
    <source>
        <dbReference type="PROSITE-ProRule" id="PRU00187"/>
    </source>
</evidence>
<evidence type="ECO:0000256" key="6">
    <source>
        <dbReference type="SAM" id="MobiDB-lite"/>
    </source>
</evidence>
<evidence type="ECO:0000303" key="7">
    <source ref="1"/>
</evidence>
<evidence type="ECO:0000305" key="8"/>
<sequence length="653" mass="74135">MASRLPTAWSCEPVNFEDVTLGFTPEEWGLLDLKQKSLYREVMLENYRNLVSVEHQLSKPDVVSQLEEAEDFWPVERGIPQDTIPEYSELQLDPKLDPLPAESPLMNIEVVEVLTLNQEVAGPRNAQIQALYAEDGSLSPDAPSEEVQQQGKHPGDPEAARQRFRQFRYKDMTGPREALDQLRQLCHQWLQPEARSKEQILELLVLEQFLGALPVKLRTWVESQHPENCQEVVALVEGVTWISEEEVLPAGQPAEGTTCCLEVTAQQEEKQEDAAICPVTVLSEEPVTFQDVAVDFSREEWGLLGPTQRTEYRDVMLETFGHLVSVGWETTLENKELAPNSDIPQEEPAPSLKVQESSRDCTLSSTLEDTLQGGVQEVQETVLKQVESAKEKDLPQKKHFDNHESQANSGTLDTNQVSLQKIDSVESQVNNGALNTNQVLLQKIPPRKQLRKCDSQVKSMKHNSRVKIHQKSYERQKAKEGNGCRKTFSRSAKQITFIRIHKGSQVCRCSECGKIFRNPRYFSVHKKIHTGERPYVCQACGKGFVQSSSLTQHQRVHSGERPFECHECGRTFNDRSAISQHLRTHTGAKPYKCQDCGKAFRQSSHLIRHQRTHTGERPYACNKCGKAFTQSSHLIGHQRTHNRTKRKKKQPTS</sequence>
<organism>
    <name type="scientific">Macaca fascicularis</name>
    <name type="common">Crab-eating macaque</name>
    <name type="synonym">Cynomolgus monkey</name>
    <dbReference type="NCBI Taxonomy" id="9541"/>
    <lineage>
        <taxon>Eukaryota</taxon>
        <taxon>Metazoa</taxon>
        <taxon>Chordata</taxon>
        <taxon>Craniata</taxon>
        <taxon>Vertebrata</taxon>
        <taxon>Euteleostomi</taxon>
        <taxon>Mammalia</taxon>
        <taxon>Eutheria</taxon>
        <taxon>Euarchontoglires</taxon>
        <taxon>Primates</taxon>
        <taxon>Haplorrhini</taxon>
        <taxon>Catarrhini</taxon>
        <taxon>Cercopithecidae</taxon>
        <taxon>Cercopithecinae</taxon>
        <taxon>Macaca</taxon>
    </lineage>
</organism>
<dbReference type="EMBL" id="AB168473">
    <property type="protein sequence ID" value="BAE00593.1"/>
    <property type="molecule type" value="mRNA"/>
</dbReference>
<dbReference type="EMBL" id="AB179446">
    <property type="protein sequence ID" value="BAE02497.1"/>
    <property type="molecule type" value="mRNA"/>
</dbReference>
<dbReference type="RefSeq" id="NP_001270154.1">
    <property type="nucleotide sequence ID" value="NM_001283225.1"/>
</dbReference>
<dbReference type="RefSeq" id="XP_005590640.1">
    <property type="nucleotide sequence ID" value="XM_005590583.2"/>
</dbReference>
<dbReference type="SMR" id="Q4R8H9"/>
<dbReference type="STRING" id="9541.ENSMFAP00000036733"/>
<dbReference type="Ensembl" id="ENSMFAT00000010981.2">
    <molecule id="Q4R8H9-1"/>
    <property type="protein sequence ID" value="ENSMFAP00000036733.1"/>
    <property type="gene ID" value="ENSMFAG00000034673.2"/>
</dbReference>
<dbReference type="GeneID" id="101867030"/>
<dbReference type="KEGG" id="mcf:101867030"/>
<dbReference type="CTD" id="10782"/>
<dbReference type="VEuPathDB" id="HostDB:ENSMFAG00000034673"/>
<dbReference type="eggNOG" id="KOG1721">
    <property type="taxonomic scope" value="Eukaryota"/>
</dbReference>
<dbReference type="GeneTree" id="ENSGT00940000162111"/>
<dbReference type="Proteomes" id="UP000233100">
    <property type="component" value="Chromosome 19"/>
</dbReference>
<dbReference type="Bgee" id="ENSMFAG00000034673">
    <property type="expression patterns" value="Expressed in heart and 13 other cell types or tissues"/>
</dbReference>
<dbReference type="GO" id="GO:0005737">
    <property type="term" value="C:cytoplasm"/>
    <property type="evidence" value="ECO:0007669"/>
    <property type="project" value="UniProtKB-SubCell"/>
</dbReference>
<dbReference type="GO" id="GO:0005730">
    <property type="term" value="C:nucleolus"/>
    <property type="evidence" value="ECO:0007669"/>
    <property type="project" value="UniProtKB-SubCell"/>
</dbReference>
<dbReference type="GO" id="GO:0003682">
    <property type="term" value="F:chromatin binding"/>
    <property type="evidence" value="ECO:0000250"/>
    <property type="project" value="UniProtKB"/>
</dbReference>
<dbReference type="GO" id="GO:0000981">
    <property type="term" value="F:DNA-binding transcription factor activity, RNA polymerase II-specific"/>
    <property type="evidence" value="ECO:0007669"/>
    <property type="project" value="TreeGrafter"/>
</dbReference>
<dbReference type="GO" id="GO:0000977">
    <property type="term" value="F:RNA polymerase II transcription regulatory region sequence-specific DNA binding"/>
    <property type="evidence" value="ECO:0007669"/>
    <property type="project" value="TreeGrafter"/>
</dbReference>
<dbReference type="GO" id="GO:0008270">
    <property type="term" value="F:zinc ion binding"/>
    <property type="evidence" value="ECO:0007669"/>
    <property type="project" value="UniProtKB-KW"/>
</dbReference>
<dbReference type="GO" id="GO:0006338">
    <property type="term" value="P:chromatin remodeling"/>
    <property type="evidence" value="ECO:0000250"/>
    <property type="project" value="UniProtKB"/>
</dbReference>
<dbReference type="CDD" id="cd07765">
    <property type="entry name" value="KRAB_A-box"/>
    <property type="match status" value="2"/>
</dbReference>
<dbReference type="CDD" id="cd07936">
    <property type="entry name" value="SCAN"/>
    <property type="match status" value="1"/>
</dbReference>
<dbReference type="FunFam" id="3.30.160.60:FF:000965">
    <property type="entry name" value="Neurotrophin receptor-interacting factor homolog"/>
    <property type="match status" value="1"/>
</dbReference>
<dbReference type="FunFam" id="3.30.160.60:FF:001712">
    <property type="entry name" value="Neurotrophin receptor-interacting factor homolog"/>
    <property type="match status" value="1"/>
</dbReference>
<dbReference type="FunFam" id="3.30.160.60:FF:001429">
    <property type="entry name" value="neurotrophin receptor-interacting factor homolog"/>
    <property type="match status" value="1"/>
</dbReference>
<dbReference type="FunFam" id="3.30.160.60:FF:000295">
    <property type="entry name" value="zinc finger protein 19"/>
    <property type="match status" value="1"/>
</dbReference>
<dbReference type="FunFam" id="1.10.4020.10:FF:000001">
    <property type="entry name" value="zinc finger protein 263 isoform X1"/>
    <property type="match status" value="1"/>
</dbReference>
<dbReference type="FunFam" id="3.30.160.60:FF:000212">
    <property type="entry name" value="zinc finger protein 382 isoform X2"/>
    <property type="match status" value="1"/>
</dbReference>
<dbReference type="Gene3D" id="6.10.140.140">
    <property type="match status" value="2"/>
</dbReference>
<dbReference type="Gene3D" id="3.30.160.60">
    <property type="entry name" value="Classic Zinc Finger"/>
    <property type="match status" value="5"/>
</dbReference>
<dbReference type="Gene3D" id="1.10.4020.10">
    <property type="entry name" value="DNA breaking-rejoining enzymes"/>
    <property type="match status" value="1"/>
</dbReference>
<dbReference type="InterPro" id="IPR001909">
    <property type="entry name" value="KRAB"/>
</dbReference>
<dbReference type="InterPro" id="IPR036051">
    <property type="entry name" value="KRAB_dom_sf"/>
</dbReference>
<dbReference type="InterPro" id="IPR003309">
    <property type="entry name" value="SCAN_dom"/>
</dbReference>
<dbReference type="InterPro" id="IPR038269">
    <property type="entry name" value="SCAN_sf"/>
</dbReference>
<dbReference type="InterPro" id="IPR036236">
    <property type="entry name" value="Znf_C2H2_sf"/>
</dbReference>
<dbReference type="InterPro" id="IPR013087">
    <property type="entry name" value="Znf_C2H2_type"/>
</dbReference>
<dbReference type="PANTHER" id="PTHR24381">
    <property type="entry name" value="ZINC FINGER PROTEIN"/>
    <property type="match status" value="1"/>
</dbReference>
<dbReference type="PANTHER" id="PTHR24381:SF390">
    <property type="entry name" value="ZINC FINGER PROTEIN 37 HOMOLOG"/>
    <property type="match status" value="1"/>
</dbReference>
<dbReference type="Pfam" id="PF01352">
    <property type="entry name" value="KRAB"/>
    <property type="match status" value="2"/>
</dbReference>
<dbReference type="Pfam" id="PF02023">
    <property type="entry name" value="SCAN"/>
    <property type="match status" value="1"/>
</dbReference>
<dbReference type="Pfam" id="PF00096">
    <property type="entry name" value="zf-C2H2"/>
    <property type="match status" value="5"/>
</dbReference>
<dbReference type="SMART" id="SM00349">
    <property type="entry name" value="KRAB"/>
    <property type="match status" value="2"/>
</dbReference>
<dbReference type="SMART" id="SM00431">
    <property type="entry name" value="SCAN"/>
    <property type="match status" value="1"/>
</dbReference>
<dbReference type="SMART" id="SM00355">
    <property type="entry name" value="ZnF_C2H2"/>
    <property type="match status" value="5"/>
</dbReference>
<dbReference type="SUPFAM" id="SSF57667">
    <property type="entry name" value="beta-beta-alpha zinc fingers"/>
    <property type="match status" value="4"/>
</dbReference>
<dbReference type="SUPFAM" id="SSF109640">
    <property type="entry name" value="KRAB domain (Kruppel-associated box)"/>
    <property type="match status" value="2"/>
</dbReference>
<dbReference type="SUPFAM" id="SSF47353">
    <property type="entry name" value="Retrovirus capsid dimerization domain-like"/>
    <property type="match status" value="1"/>
</dbReference>
<dbReference type="PROSITE" id="PS50805">
    <property type="entry name" value="KRAB"/>
    <property type="match status" value="2"/>
</dbReference>
<dbReference type="PROSITE" id="PS50804">
    <property type="entry name" value="SCAN_BOX"/>
    <property type="match status" value="1"/>
</dbReference>
<dbReference type="PROSITE" id="PS00028">
    <property type="entry name" value="ZINC_FINGER_C2H2_1"/>
    <property type="match status" value="5"/>
</dbReference>
<dbReference type="PROSITE" id="PS50157">
    <property type="entry name" value="ZINC_FINGER_C2H2_2"/>
    <property type="match status" value="5"/>
</dbReference>
<gene>
    <name type="primary">ZNF274</name>
    <name type="ORF">QtsA-12436</name>
    <name type="ORF">QtsA-20146</name>
</gene>
<reference key="1">
    <citation type="submission" date="2005-06" db="EMBL/GenBank/DDBJ databases">
        <title>DNA sequences of macaque genes expressed in brain or testis and its evolutionary implications.</title>
        <authorList>
            <consortium name="International consortium for macaque cDNA sequencing and analysis"/>
        </authorList>
    </citation>
    <scope>NUCLEOTIDE SEQUENCE [LARGE SCALE MRNA] (ISOFORMS 1 AND 2)</scope>
    <source>
        <tissue>Testis</tissue>
    </source>
</reference>
<feature type="chain" id="PRO_0000406965" description="Neurotrophin receptor-interacting factor homolog">
    <location>
        <begin position="1"/>
        <end position="653"/>
    </location>
</feature>
<feature type="domain" description="KRAB 1" evidence="4">
    <location>
        <begin position="14"/>
        <end position="85"/>
    </location>
</feature>
<feature type="domain" description="SCAN box" evidence="5">
    <location>
        <begin position="161"/>
        <end position="243"/>
    </location>
</feature>
<feature type="domain" description="KRAB 2" evidence="4">
    <location>
        <begin position="287"/>
        <end position="360"/>
    </location>
</feature>
<feature type="zinc finger region" description="C2H2-type 1" evidence="3">
    <location>
        <begin position="507"/>
        <end position="529"/>
    </location>
</feature>
<feature type="zinc finger region" description="C2H2-type 2" evidence="3">
    <location>
        <begin position="535"/>
        <end position="557"/>
    </location>
</feature>
<feature type="zinc finger region" description="C2H2-type 3" evidence="3">
    <location>
        <begin position="563"/>
        <end position="585"/>
    </location>
</feature>
<feature type="zinc finger region" description="C2H2-type 4" evidence="3">
    <location>
        <begin position="591"/>
        <end position="613"/>
    </location>
</feature>
<feature type="zinc finger region" description="C2H2-type 5" evidence="3">
    <location>
        <begin position="619"/>
        <end position="641"/>
    </location>
</feature>
<feature type="region of interest" description="Disordered" evidence="6">
    <location>
        <begin position="136"/>
        <end position="159"/>
    </location>
</feature>
<feature type="region of interest" description="Disordered" evidence="6">
    <location>
        <begin position="339"/>
        <end position="359"/>
    </location>
</feature>
<feature type="region of interest" description="Disordered" evidence="6">
    <location>
        <begin position="388"/>
        <end position="414"/>
    </location>
</feature>
<feature type="region of interest" description="Disordered" evidence="6">
    <location>
        <begin position="456"/>
        <end position="485"/>
    </location>
</feature>
<feature type="region of interest" description="Disordered" evidence="6">
    <location>
        <begin position="632"/>
        <end position="653"/>
    </location>
</feature>
<feature type="compositionally biased region" description="Basic and acidic residues" evidence="6">
    <location>
        <begin position="388"/>
        <end position="404"/>
    </location>
</feature>
<feature type="compositionally biased region" description="Polar residues" evidence="6">
    <location>
        <begin position="405"/>
        <end position="414"/>
    </location>
</feature>
<feature type="compositionally biased region" description="Basic residues" evidence="6">
    <location>
        <begin position="459"/>
        <end position="470"/>
    </location>
</feature>
<feature type="compositionally biased region" description="Basic and acidic residues" evidence="6">
    <location>
        <begin position="471"/>
        <end position="483"/>
    </location>
</feature>
<feature type="compositionally biased region" description="Basic residues" evidence="6">
    <location>
        <begin position="636"/>
        <end position="653"/>
    </location>
</feature>
<feature type="splice variant" id="VSP_040911" description="In isoform 2." evidence="7">
    <location>
        <begin position="290"/>
        <end position="375"/>
    </location>
</feature>
<feature type="sequence conflict" description="In Ref. 1; BAE02497." evidence="8" ref="1">
    <original>N</original>
    <variation>D</variation>
    <location>
        <position position="408"/>
    </location>
</feature>
<keyword id="KW-0025">Alternative splicing</keyword>
<keyword id="KW-0963">Cytoplasm</keyword>
<keyword id="KW-0238">DNA-binding</keyword>
<keyword id="KW-0479">Metal-binding</keyword>
<keyword id="KW-0539">Nucleus</keyword>
<keyword id="KW-1185">Reference proteome</keyword>
<keyword id="KW-0677">Repeat</keyword>
<keyword id="KW-0678">Repressor</keyword>
<keyword id="KW-0804">Transcription</keyword>
<keyword id="KW-0805">Transcription regulation</keyword>
<keyword id="KW-0862">Zinc</keyword>
<keyword id="KW-0863">Zinc-finger</keyword>
<proteinExistence type="evidence at transcript level"/>
<comment type="function">
    <text evidence="2">Probable transcription repressor. Specifically binds to the 3'-end of zinc-finger coding genes and recruiting chromatin-modifying proteins such as SETDB1 and TRIM28/KAP1, leading to transcription repression. The SETDB1-TRIM28-ZNF274 complex may play a role in recruiting ATRX to the 3'-exons of zinc-finger coding genes with atypical chromatin signatures to establish or maintain/protect H3K9me3 at these transcriptionally active regions (By similarity).</text>
</comment>
<comment type="subunit">
    <text evidence="2">Interacts with SETDB1 and TRIM28/KAP1. Interacts with ATRX. Forms a complex with ATRX, SETDB1 and TRIM28.</text>
</comment>
<comment type="subcellular location">
    <subcellularLocation>
        <location evidence="1">Cytoplasm</location>
    </subcellularLocation>
    <subcellularLocation>
        <location evidence="2">Nucleus</location>
        <location evidence="2">Nucleolus</location>
    </subcellularLocation>
</comment>
<comment type="alternative products">
    <event type="alternative splicing"/>
    <isoform>
        <id>Q4R8H9-1</id>
        <name>1</name>
        <sequence type="displayed"/>
    </isoform>
    <isoform>
        <id>Q4R8H9-2</id>
        <name>2</name>
        <sequence type="described" ref="VSP_040911"/>
    </isoform>
</comment>
<comment type="similarity">
    <text evidence="8">Belongs to the krueppel C2H2-type zinc-finger protein family.</text>
</comment>
<protein>
    <recommendedName>
        <fullName>Neurotrophin receptor-interacting factor homolog</fullName>
    </recommendedName>
    <alternativeName>
        <fullName>Zinc finger protein 274</fullName>
    </alternativeName>
</protein>
<accession>Q4R8H9</accession>
<accession>Q4R322</accession>